<gene>
    <name evidence="1" type="primary">coaX</name>
    <name type="ordered locus">alr3896</name>
</gene>
<accession>Q8YQD7</accession>
<comment type="function">
    <text evidence="1">Catalyzes the phosphorylation of pantothenate (Pan), the first step in CoA biosynthesis.</text>
</comment>
<comment type="catalytic activity">
    <reaction evidence="1">
        <text>(R)-pantothenate + ATP = (R)-4'-phosphopantothenate + ADP + H(+)</text>
        <dbReference type="Rhea" id="RHEA:16373"/>
        <dbReference type="ChEBI" id="CHEBI:10986"/>
        <dbReference type="ChEBI" id="CHEBI:15378"/>
        <dbReference type="ChEBI" id="CHEBI:29032"/>
        <dbReference type="ChEBI" id="CHEBI:30616"/>
        <dbReference type="ChEBI" id="CHEBI:456216"/>
        <dbReference type="EC" id="2.7.1.33"/>
    </reaction>
</comment>
<comment type="cofactor">
    <cofactor evidence="1">
        <name>NH4(+)</name>
        <dbReference type="ChEBI" id="CHEBI:28938"/>
    </cofactor>
    <cofactor evidence="1">
        <name>K(+)</name>
        <dbReference type="ChEBI" id="CHEBI:29103"/>
    </cofactor>
    <text evidence="1">A monovalent cation. Ammonium or potassium.</text>
</comment>
<comment type="pathway">
    <text evidence="1">Cofactor biosynthesis; coenzyme A biosynthesis; CoA from (R)-pantothenate: step 1/5.</text>
</comment>
<comment type="subunit">
    <text evidence="1">Homodimer.</text>
</comment>
<comment type="subcellular location">
    <subcellularLocation>
        <location evidence="1">Cytoplasm</location>
    </subcellularLocation>
</comment>
<comment type="similarity">
    <text evidence="1">Belongs to the type III pantothenate kinase family.</text>
</comment>
<evidence type="ECO:0000255" key="1">
    <source>
        <dbReference type="HAMAP-Rule" id="MF_01274"/>
    </source>
</evidence>
<organism>
    <name type="scientific">Nostoc sp. (strain PCC 7120 / SAG 25.82 / UTEX 2576)</name>
    <dbReference type="NCBI Taxonomy" id="103690"/>
    <lineage>
        <taxon>Bacteria</taxon>
        <taxon>Bacillati</taxon>
        <taxon>Cyanobacteriota</taxon>
        <taxon>Cyanophyceae</taxon>
        <taxon>Nostocales</taxon>
        <taxon>Nostocaceae</taxon>
        <taxon>Nostoc</taxon>
    </lineage>
</organism>
<proteinExistence type="inferred from homology"/>
<dbReference type="EC" id="2.7.1.33" evidence="1"/>
<dbReference type="EMBL" id="BA000019">
    <property type="protein sequence ID" value="BAB75595.1"/>
    <property type="molecule type" value="Genomic_DNA"/>
</dbReference>
<dbReference type="PIR" id="AI2292">
    <property type="entry name" value="AI2292"/>
</dbReference>
<dbReference type="RefSeq" id="WP_010998037.1">
    <property type="nucleotide sequence ID" value="NZ_JACJQQ010000004.1"/>
</dbReference>
<dbReference type="SMR" id="Q8YQD7"/>
<dbReference type="STRING" id="103690.gene:10495938"/>
<dbReference type="KEGG" id="ana:alr3896"/>
<dbReference type="eggNOG" id="COG1521">
    <property type="taxonomic scope" value="Bacteria"/>
</dbReference>
<dbReference type="OrthoDB" id="482945at2"/>
<dbReference type="UniPathway" id="UPA00241">
    <property type="reaction ID" value="UER00352"/>
</dbReference>
<dbReference type="Proteomes" id="UP000002483">
    <property type="component" value="Chromosome"/>
</dbReference>
<dbReference type="GO" id="GO:0005737">
    <property type="term" value="C:cytoplasm"/>
    <property type="evidence" value="ECO:0007669"/>
    <property type="project" value="UniProtKB-SubCell"/>
</dbReference>
<dbReference type="GO" id="GO:0005524">
    <property type="term" value="F:ATP binding"/>
    <property type="evidence" value="ECO:0007669"/>
    <property type="project" value="UniProtKB-UniRule"/>
</dbReference>
<dbReference type="GO" id="GO:0046872">
    <property type="term" value="F:metal ion binding"/>
    <property type="evidence" value="ECO:0007669"/>
    <property type="project" value="UniProtKB-KW"/>
</dbReference>
<dbReference type="GO" id="GO:0004594">
    <property type="term" value="F:pantothenate kinase activity"/>
    <property type="evidence" value="ECO:0007669"/>
    <property type="project" value="UniProtKB-UniRule"/>
</dbReference>
<dbReference type="GO" id="GO:0015937">
    <property type="term" value="P:coenzyme A biosynthetic process"/>
    <property type="evidence" value="ECO:0007669"/>
    <property type="project" value="UniProtKB-UniRule"/>
</dbReference>
<dbReference type="CDD" id="cd24015">
    <property type="entry name" value="ASKHA_NBD_PanK-III"/>
    <property type="match status" value="1"/>
</dbReference>
<dbReference type="Gene3D" id="3.30.420.40">
    <property type="match status" value="1"/>
</dbReference>
<dbReference type="HAMAP" id="MF_01274">
    <property type="entry name" value="Pantothen_kinase_3"/>
    <property type="match status" value="1"/>
</dbReference>
<dbReference type="InterPro" id="IPR043129">
    <property type="entry name" value="ATPase_NBD"/>
</dbReference>
<dbReference type="InterPro" id="IPR004619">
    <property type="entry name" value="Type_III_PanK"/>
</dbReference>
<dbReference type="NCBIfam" id="TIGR00671">
    <property type="entry name" value="baf"/>
    <property type="match status" value="1"/>
</dbReference>
<dbReference type="NCBIfam" id="NF009871">
    <property type="entry name" value="PRK13331.1"/>
    <property type="match status" value="1"/>
</dbReference>
<dbReference type="PANTHER" id="PTHR34265">
    <property type="entry name" value="TYPE III PANTOTHENATE KINASE"/>
    <property type="match status" value="1"/>
</dbReference>
<dbReference type="PANTHER" id="PTHR34265:SF1">
    <property type="entry name" value="TYPE III PANTOTHENATE KINASE"/>
    <property type="match status" value="1"/>
</dbReference>
<dbReference type="Pfam" id="PF03309">
    <property type="entry name" value="Pan_kinase"/>
    <property type="match status" value="1"/>
</dbReference>
<dbReference type="SUPFAM" id="SSF53067">
    <property type="entry name" value="Actin-like ATPase domain"/>
    <property type="match status" value="2"/>
</dbReference>
<name>COAX_NOSS1</name>
<sequence length="276" mass="30272">MISQQSAKHIENQWLALEIGNSRLHWALFMGESLEFTWDTEYLPESVIQQLGNGETKLEVGSEEKEIFFTFFPLPPAPCPLPLFIASVVPQQTVLWENYLNVRVITLDQIPLNNIYPTLGIDRALALWGAGMSWGFPVLVIDAGTALTFTAADGGKNLVGGAILPGVGLQFASLGQQTGQLPQVEMEAIKSLPPRFALNTTEAIQSGVIYTLIAGMRDFTEEWLSLFPDGKVAIKGGDRILLLNYLQALYPDLAARLIVEPNLIFWGMQTIVAGVA</sequence>
<keyword id="KW-0067">ATP-binding</keyword>
<keyword id="KW-0173">Coenzyme A biosynthesis</keyword>
<keyword id="KW-0963">Cytoplasm</keyword>
<keyword id="KW-0418">Kinase</keyword>
<keyword id="KW-0479">Metal-binding</keyword>
<keyword id="KW-0547">Nucleotide-binding</keyword>
<keyword id="KW-0630">Potassium</keyword>
<keyword id="KW-1185">Reference proteome</keyword>
<keyword id="KW-0808">Transferase</keyword>
<reference key="1">
    <citation type="journal article" date="2001" name="DNA Res.">
        <title>Complete genomic sequence of the filamentous nitrogen-fixing cyanobacterium Anabaena sp. strain PCC 7120.</title>
        <authorList>
            <person name="Kaneko T."/>
            <person name="Nakamura Y."/>
            <person name="Wolk C.P."/>
            <person name="Kuritz T."/>
            <person name="Sasamoto S."/>
            <person name="Watanabe A."/>
            <person name="Iriguchi M."/>
            <person name="Ishikawa A."/>
            <person name="Kawashima K."/>
            <person name="Kimura T."/>
            <person name="Kishida Y."/>
            <person name="Kohara M."/>
            <person name="Matsumoto M."/>
            <person name="Matsuno A."/>
            <person name="Muraki A."/>
            <person name="Nakazaki N."/>
            <person name="Shimpo S."/>
            <person name="Sugimoto M."/>
            <person name="Takazawa M."/>
            <person name="Yamada M."/>
            <person name="Yasuda M."/>
            <person name="Tabata S."/>
        </authorList>
    </citation>
    <scope>NUCLEOTIDE SEQUENCE [LARGE SCALE GENOMIC DNA]</scope>
    <source>
        <strain>PCC 7120 / SAG 25.82 / UTEX 2576</strain>
    </source>
</reference>
<protein>
    <recommendedName>
        <fullName evidence="1">Type III pantothenate kinase</fullName>
        <ecNumber evidence="1">2.7.1.33</ecNumber>
    </recommendedName>
    <alternativeName>
        <fullName evidence="1">PanK-III</fullName>
    </alternativeName>
    <alternativeName>
        <fullName evidence="1">Pantothenic acid kinase</fullName>
    </alternativeName>
</protein>
<feature type="chain" id="PRO_0000270857" description="Type III pantothenate kinase">
    <location>
        <begin position="1"/>
        <end position="276"/>
    </location>
</feature>
<feature type="active site" description="Proton acceptor" evidence="1">
    <location>
        <position position="122"/>
    </location>
</feature>
<feature type="binding site" evidence="1">
    <location>
        <begin position="18"/>
        <end position="25"/>
    </location>
    <ligand>
        <name>ATP</name>
        <dbReference type="ChEBI" id="CHEBI:30616"/>
    </ligand>
</feature>
<feature type="binding site" evidence="1">
    <location>
        <position position="116"/>
    </location>
    <ligand>
        <name>substrate</name>
    </ligand>
</feature>
<feature type="binding site" evidence="1">
    <location>
        <begin position="120"/>
        <end position="123"/>
    </location>
    <ligand>
        <name>substrate</name>
    </ligand>
</feature>
<feature type="binding site" evidence="1">
    <location>
        <position position="142"/>
    </location>
    <ligand>
        <name>K(+)</name>
        <dbReference type="ChEBI" id="CHEBI:29103"/>
    </ligand>
</feature>
<feature type="binding site" evidence="1">
    <location>
        <position position="145"/>
    </location>
    <ligand>
        <name>ATP</name>
        <dbReference type="ChEBI" id="CHEBI:30616"/>
    </ligand>
</feature>
<feature type="binding site" evidence="1">
    <location>
        <position position="200"/>
    </location>
    <ligand>
        <name>substrate</name>
    </ligand>
</feature>